<accession>Q5VN19</accession>
<accession>Q0DC96</accession>
<accession>Q5VN20</accession>
<name>MPK11_ORYSJ</name>
<proteinExistence type="evidence at transcript level"/>
<evidence type="ECO:0000250" key="1"/>
<evidence type="ECO:0000255" key="2">
    <source>
        <dbReference type="PROSITE-ProRule" id="PRU00159"/>
    </source>
</evidence>
<evidence type="ECO:0000303" key="3">
    <source>
    </source>
</evidence>
<evidence type="ECO:0000305" key="4"/>
<protein>
    <recommendedName>
        <fullName>Mitogen-activated protein kinase 11</fullName>
        <shortName>MAP kinase 11</shortName>
        <ecNumber>2.7.11.24</ecNumber>
    </recommendedName>
</protein>
<organism>
    <name type="scientific">Oryza sativa subsp. japonica</name>
    <name type="common">Rice</name>
    <dbReference type="NCBI Taxonomy" id="39947"/>
    <lineage>
        <taxon>Eukaryota</taxon>
        <taxon>Viridiplantae</taxon>
        <taxon>Streptophyta</taxon>
        <taxon>Embryophyta</taxon>
        <taxon>Tracheophyta</taxon>
        <taxon>Spermatophyta</taxon>
        <taxon>Magnoliopsida</taxon>
        <taxon>Liliopsida</taxon>
        <taxon>Poales</taxon>
        <taxon>Poaceae</taxon>
        <taxon>BOP clade</taxon>
        <taxon>Oryzoideae</taxon>
        <taxon>Oryzeae</taxon>
        <taxon>Oryzinae</taxon>
        <taxon>Oryza</taxon>
        <taxon>Oryza sativa</taxon>
    </lineage>
</organism>
<feature type="chain" id="PRO_0000239754" description="Mitogen-activated protein kinase 11">
    <location>
        <begin position="1"/>
        <end position="570"/>
    </location>
</feature>
<feature type="domain" description="Protein kinase" evidence="2">
    <location>
        <begin position="26"/>
        <end position="317"/>
    </location>
</feature>
<feature type="short sequence motif" description="TXY">
    <location>
        <begin position="188"/>
        <end position="190"/>
    </location>
</feature>
<feature type="active site" description="Proton acceptor" evidence="2">
    <location>
        <position position="152"/>
    </location>
</feature>
<feature type="binding site" evidence="2">
    <location>
        <begin position="32"/>
        <end position="40"/>
    </location>
    <ligand>
        <name>ATP</name>
        <dbReference type="ChEBI" id="CHEBI:30616"/>
    </ligand>
</feature>
<feature type="binding site" evidence="2">
    <location>
        <position position="55"/>
    </location>
    <ligand>
        <name>ATP</name>
        <dbReference type="ChEBI" id="CHEBI:30616"/>
    </ligand>
</feature>
<feature type="modified residue" description="Phosphothreonine" evidence="1">
    <location>
        <position position="188"/>
    </location>
</feature>
<feature type="modified residue" description="Phosphotyrosine" evidence="1">
    <location>
        <position position="190"/>
    </location>
</feature>
<feature type="splice variant" id="VSP_019262" description="In isoform 2." evidence="3">
    <original>STIVHS</original>
    <variation>RAFNYR</variation>
    <location>
        <begin position="416"/>
        <end position="421"/>
    </location>
</feature>
<feature type="splice variant" id="VSP_019263" description="In isoform 2." evidence="3">
    <location>
        <begin position="422"/>
        <end position="570"/>
    </location>
</feature>
<gene>
    <name type="primary">MPK11</name>
    <name type="ordered locus">Os06g0367900</name>
    <name type="ordered locus">LOC_Os06g26340</name>
    <name type="ORF">OSJNBa0015G09.36-1</name>
    <name type="ORF">OSJNBa0015G09.36-2</name>
</gene>
<keyword id="KW-0025">Alternative splicing</keyword>
<keyword id="KW-0067">ATP-binding</keyword>
<keyword id="KW-0418">Kinase</keyword>
<keyword id="KW-0547">Nucleotide-binding</keyword>
<keyword id="KW-0597">Phosphoprotein</keyword>
<keyword id="KW-1185">Reference proteome</keyword>
<keyword id="KW-0723">Serine/threonine-protein kinase</keyword>
<keyword id="KW-0808">Transferase</keyword>
<reference key="1">
    <citation type="journal article" date="2005" name="Nature">
        <title>The map-based sequence of the rice genome.</title>
        <authorList>
            <consortium name="International rice genome sequencing project (IRGSP)"/>
        </authorList>
    </citation>
    <scope>NUCLEOTIDE SEQUENCE [LARGE SCALE GENOMIC DNA]</scope>
    <source>
        <strain>cv. Nipponbare</strain>
    </source>
</reference>
<reference key="2">
    <citation type="journal article" date="2008" name="Nucleic Acids Res.">
        <title>The rice annotation project database (RAP-DB): 2008 update.</title>
        <authorList>
            <consortium name="The rice annotation project (RAP)"/>
        </authorList>
    </citation>
    <scope>GENOME REANNOTATION</scope>
    <source>
        <strain>cv. Nipponbare</strain>
    </source>
</reference>
<reference key="3">
    <citation type="journal article" date="2013" name="Rice">
        <title>Improvement of the Oryza sativa Nipponbare reference genome using next generation sequence and optical map data.</title>
        <authorList>
            <person name="Kawahara Y."/>
            <person name="de la Bastide M."/>
            <person name="Hamilton J.P."/>
            <person name="Kanamori H."/>
            <person name="McCombie W.R."/>
            <person name="Ouyang S."/>
            <person name="Schwartz D.C."/>
            <person name="Tanaka T."/>
            <person name="Wu J."/>
            <person name="Zhou S."/>
            <person name="Childs K.L."/>
            <person name="Davidson R.M."/>
            <person name="Lin H."/>
            <person name="Quesada-Ocampo L."/>
            <person name="Vaillancourt B."/>
            <person name="Sakai H."/>
            <person name="Lee S.S."/>
            <person name="Kim J."/>
            <person name="Numa H."/>
            <person name="Itoh T."/>
            <person name="Buell C.R."/>
            <person name="Matsumoto T."/>
        </authorList>
    </citation>
    <scope>GENOME REANNOTATION</scope>
    <source>
        <strain>cv. Nipponbare</strain>
    </source>
</reference>
<reference key="4">
    <citation type="journal article" date="2003" name="Science">
        <title>Collection, mapping, and annotation of over 28,000 cDNA clones from japonica rice.</title>
        <authorList>
            <consortium name="The rice full-length cDNA consortium"/>
        </authorList>
    </citation>
    <scope>NUCLEOTIDE SEQUENCE [LARGE SCALE MRNA] (ISOFORMS 1 AND 2)</scope>
    <source>
        <strain>cv. Nipponbare</strain>
    </source>
</reference>
<reference key="5">
    <citation type="journal article" date="2006" name="Mol. Plant Microbe Interact.">
        <title>Molecular analysis of the rice MAP kinase gene family in relation to Magnaporthe grisea infection.</title>
        <authorList>
            <person name="Reyna N.S."/>
            <person name="Yang Y."/>
        </authorList>
    </citation>
    <scope>NOMENCLATURE</scope>
</reference>
<sequence>MQTSNFRKKNAAEVDFFMGYGDVNRYEVLEVIGKGSYGLVCSANDIHTGEKVAIKKIHNIFEHISDAARILREIKLLRLLRHPDIVEIKHIMLPPSKMDFRDIYVVFELMESDLHQVIKANDDLTREHYQFFLYQMLRALKYIHTANVYHRDLKPKNILANANCKLKICDFGLARVAFTDAPTTVFWTDYVATRWYRAPELCGSFYSKYTPAIDIWSIGCIFAEVLIGKPLFPGKNVVHQLDLITDLLGTPSLDAISQVRNDKARKYLTCMRKKQPASFSHKFLKADPLALQLLRKLLAFDPKDRPSAQEALADPYFNGLAKVEREPSCQPIPKMEFEFERRRATKEDIKELIFQEILEYHPQLLKEHISGTERPNFHHLSVVDQFRKQFTQVEENLNGSGAAVSLQRKHSSLPRSTIVHSAAIPAKDYKHVASSSTKLAVDGSWNAQIQGVHANIAGEPSTIVRPAVSSERSLAPTLQWQPNMTHFLNHALCYQNTVFSGSLLDATGPAQAIPRTTPYVDYRSGNLDLYQHHVSREDVQSDTATAQAHAASHGPVPAVSYSLPGTYRIT</sequence>
<dbReference type="EC" id="2.7.11.24"/>
<dbReference type="EMBL" id="AP005763">
    <property type="protein sequence ID" value="BAD69155.1"/>
    <property type="molecule type" value="Genomic_DNA"/>
</dbReference>
<dbReference type="EMBL" id="AP005763">
    <property type="protein sequence ID" value="BAD69156.1"/>
    <property type="molecule type" value="Genomic_DNA"/>
</dbReference>
<dbReference type="EMBL" id="AP008212">
    <property type="protein sequence ID" value="BAF19527.1"/>
    <property type="molecule type" value="Genomic_DNA"/>
</dbReference>
<dbReference type="EMBL" id="AP014962">
    <property type="protein sequence ID" value="BAS97726.1"/>
    <property type="molecule type" value="Genomic_DNA"/>
</dbReference>
<dbReference type="EMBL" id="AP014962">
    <property type="protein sequence ID" value="BAS97727.1"/>
    <property type="molecule type" value="Genomic_DNA"/>
</dbReference>
<dbReference type="EMBL" id="AK065641">
    <property type="status" value="NOT_ANNOTATED_CDS"/>
    <property type="molecule type" value="mRNA"/>
</dbReference>
<dbReference type="EMBL" id="AK066968">
    <property type="protein sequence ID" value="BAG90204.1"/>
    <property type="molecule type" value="mRNA"/>
</dbReference>
<dbReference type="EMBL" id="AK100081">
    <property type="protein sequence ID" value="BAG94435.1"/>
    <property type="molecule type" value="mRNA"/>
</dbReference>
<dbReference type="RefSeq" id="XP_015643951.1">
    <property type="nucleotide sequence ID" value="XM_015788465.1"/>
</dbReference>
<dbReference type="RefSeq" id="XP_015643953.1">
    <property type="nucleotide sequence ID" value="XM_015788467.1"/>
</dbReference>
<dbReference type="SMR" id="Q5VN19"/>
<dbReference type="FunCoup" id="Q5VN19">
    <property type="interactions" value="74"/>
</dbReference>
<dbReference type="STRING" id="39947.Q5VN19"/>
<dbReference type="PaxDb" id="39947-Q5VN19"/>
<dbReference type="EnsemblPlants" id="Os06t0367900-01">
    <molecule id="Q5VN19-1"/>
    <property type="protein sequence ID" value="Os06t0367900-01"/>
    <property type="gene ID" value="Os06g0367900"/>
</dbReference>
<dbReference type="Gramene" id="Os06t0367900-01">
    <molecule id="Q5VN19-1"/>
    <property type="protein sequence ID" value="Os06t0367900-01"/>
    <property type="gene ID" value="Os06g0367900"/>
</dbReference>
<dbReference type="KEGG" id="dosa:Os06g0367900"/>
<dbReference type="eggNOG" id="KOG0660">
    <property type="taxonomic scope" value="Eukaryota"/>
</dbReference>
<dbReference type="HOGENOM" id="CLU_000288_181_5_1"/>
<dbReference type="InParanoid" id="Q5VN19"/>
<dbReference type="OMA" id="QIQGVHA"/>
<dbReference type="OrthoDB" id="2396at2759"/>
<dbReference type="Proteomes" id="UP000000763">
    <property type="component" value="Chromosome 6"/>
</dbReference>
<dbReference type="Proteomes" id="UP000059680">
    <property type="component" value="Chromosome 6"/>
</dbReference>
<dbReference type="ExpressionAtlas" id="Q5VN19">
    <property type="expression patterns" value="baseline and differential"/>
</dbReference>
<dbReference type="GO" id="GO:0005737">
    <property type="term" value="C:cytoplasm"/>
    <property type="evidence" value="ECO:0000318"/>
    <property type="project" value="GO_Central"/>
</dbReference>
<dbReference type="GO" id="GO:0005634">
    <property type="term" value="C:nucleus"/>
    <property type="evidence" value="ECO:0000318"/>
    <property type="project" value="GO_Central"/>
</dbReference>
<dbReference type="GO" id="GO:0005524">
    <property type="term" value="F:ATP binding"/>
    <property type="evidence" value="ECO:0007669"/>
    <property type="project" value="UniProtKB-KW"/>
</dbReference>
<dbReference type="GO" id="GO:0004707">
    <property type="term" value="F:MAP kinase activity"/>
    <property type="evidence" value="ECO:0007669"/>
    <property type="project" value="UniProtKB-EC"/>
</dbReference>
<dbReference type="GO" id="GO:0106310">
    <property type="term" value="F:protein serine kinase activity"/>
    <property type="evidence" value="ECO:0007669"/>
    <property type="project" value="RHEA"/>
</dbReference>
<dbReference type="GO" id="GO:0004674">
    <property type="term" value="F:protein serine/threonine kinase activity"/>
    <property type="evidence" value="ECO:0000318"/>
    <property type="project" value="GO_Central"/>
</dbReference>
<dbReference type="GO" id="GO:0035556">
    <property type="term" value="P:intracellular signal transduction"/>
    <property type="evidence" value="ECO:0000318"/>
    <property type="project" value="GO_Central"/>
</dbReference>
<dbReference type="CDD" id="cd07859">
    <property type="entry name" value="STKc_TDY_MAPK"/>
    <property type="match status" value="1"/>
</dbReference>
<dbReference type="FunFam" id="1.10.510.10:FF:000017">
    <property type="entry name" value="Mitogen-activated protein kinase"/>
    <property type="match status" value="1"/>
</dbReference>
<dbReference type="FunFam" id="3.30.200.20:FF:000046">
    <property type="entry name" value="Mitogen-activated protein kinase"/>
    <property type="match status" value="1"/>
</dbReference>
<dbReference type="Gene3D" id="3.30.200.20">
    <property type="entry name" value="Phosphorylase Kinase, domain 1"/>
    <property type="match status" value="1"/>
</dbReference>
<dbReference type="Gene3D" id="1.10.510.10">
    <property type="entry name" value="Transferase(Phosphotransferase) domain 1"/>
    <property type="match status" value="1"/>
</dbReference>
<dbReference type="InterPro" id="IPR011009">
    <property type="entry name" value="Kinase-like_dom_sf"/>
</dbReference>
<dbReference type="InterPro" id="IPR050117">
    <property type="entry name" value="MAP_kinase"/>
</dbReference>
<dbReference type="InterPro" id="IPR003527">
    <property type="entry name" value="MAP_kinase_CS"/>
</dbReference>
<dbReference type="InterPro" id="IPR000719">
    <property type="entry name" value="Prot_kinase_dom"/>
</dbReference>
<dbReference type="InterPro" id="IPR017441">
    <property type="entry name" value="Protein_kinase_ATP_BS"/>
</dbReference>
<dbReference type="PANTHER" id="PTHR24055">
    <property type="entry name" value="MITOGEN-ACTIVATED PROTEIN KINASE"/>
    <property type="match status" value="1"/>
</dbReference>
<dbReference type="Pfam" id="PF00069">
    <property type="entry name" value="Pkinase"/>
    <property type="match status" value="1"/>
</dbReference>
<dbReference type="SMART" id="SM00220">
    <property type="entry name" value="S_TKc"/>
    <property type="match status" value="1"/>
</dbReference>
<dbReference type="SUPFAM" id="SSF56112">
    <property type="entry name" value="Protein kinase-like (PK-like)"/>
    <property type="match status" value="1"/>
</dbReference>
<dbReference type="PROSITE" id="PS01351">
    <property type="entry name" value="MAPK"/>
    <property type="match status" value="1"/>
</dbReference>
<dbReference type="PROSITE" id="PS00107">
    <property type="entry name" value="PROTEIN_KINASE_ATP"/>
    <property type="match status" value="1"/>
</dbReference>
<dbReference type="PROSITE" id="PS50011">
    <property type="entry name" value="PROTEIN_KINASE_DOM"/>
    <property type="match status" value="1"/>
</dbReference>
<comment type="catalytic activity">
    <reaction>
        <text>L-seryl-[protein] + ATP = O-phospho-L-seryl-[protein] + ADP + H(+)</text>
        <dbReference type="Rhea" id="RHEA:17989"/>
        <dbReference type="Rhea" id="RHEA-COMP:9863"/>
        <dbReference type="Rhea" id="RHEA-COMP:11604"/>
        <dbReference type="ChEBI" id="CHEBI:15378"/>
        <dbReference type="ChEBI" id="CHEBI:29999"/>
        <dbReference type="ChEBI" id="CHEBI:30616"/>
        <dbReference type="ChEBI" id="CHEBI:83421"/>
        <dbReference type="ChEBI" id="CHEBI:456216"/>
        <dbReference type="EC" id="2.7.11.24"/>
    </reaction>
</comment>
<comment type="catalytic activity">
    <reaction>
        <text>L-threonyl-[protein] + ATP = O-phospho-L-threonyl-[protein] + ADP + H(+)</text>
        <dbReference type="Rhea" id="RHEA:46608"/>
        <dbReference type="Rhea" id="RHEA-COMP:11060"/>
        <dbReference type="Rhea" id="RHEA-COMP:11605"/>
        <dbReference type="ChEBI" id="CHEBI:15378"/>
        <dbReference type="ChEBI" id="CHEBI:30013"/>
        <dbReference type="ChEBI" id="CHEBI:30616"/>
        <dbReference type="ChEBI" id="CHEBI:61977"/>
        <dbReference type="ChEBI" id="CHEBI:456216"/>
        <dbReference type="EC" id="2.7.11.24"/>
    </reaction>
</comment>
<comment type="activity regulation">
    <text evidence="1">Activated by threonine and tyrosine phosphorylation.</text>
</comment>
<comment type="alternative products">
    <event type="alternative splicing"/>
    <isoform>
        <id>Q5VN19-1</id>
        <name>1</name>
        <sequence type="displayed"/>
    </isoform>
    <isoform>
        <id>Q5VN19-2</id>
        <name>2</name>
        <sequence type="described" ref="VSP_019262 VSP_019263"/>
    </isoform>
</comment>
<comment type="domain">
    <text>The TXY motif contains the threonine and tyrosine residues whose phosphorylation activates the MAP kinases.</text>
</comment>
<comment type="PTM">
    <text evidence="1">Dually phosphorylated on Thr-188 and Tyr-190, which activates the enzyme.</text>
</comment>
<comment type="similarity">
    <text evidence="4">Belongs to the protein kinase superfamily. CMGC Ser/Thr protein kinase family. MAP kinase subfamily.</text>
</comment>